<keyword id="KW-0123">Cardiotoxin</keyword>
<keyword id="KW-1015">Disulfide bond</keyword>
<keyword id="KW-0872">Ion channel impairing toxin</keyword>
<keyword id="KW-0166">Nematocyst</keyword>
<keyword id="KW-0528">Neurotoxin</keyword>
<keyword id="KW-0964">Secreted</keyword>
<keyword id="KW-0800">Toxin</keyword>
<keyword id="KW-0738">Voltage-gated sodium channel impairing toxin</keyword>
<accession>P0C5G3</accession>
<reference key="1">
    <citation type="journal article" date="1998" name="Toxicon">
        <title>Identification and characterization of novel sodium channel toxins from the sea anemone Anthopleura xanthogrammica.</title>
        <authorList>
            <person name="Kelso G.J."/>
            <person name="Blumenthal K.M."/>
        </authorList>
    </citation>
    <scope>NUCLEOTIDE SEQUENCE [MRNA]</scope>
    <scope>FUNCTION</scope>
    <source>
        <tissue>Tentacle</tissue>
    </source>
</reference>
<reference key="2">
    <citation type="journal article" date="2012" name="Toxicon">
        <title>Development of a rational nomenclature for naming peptide and protein toxins from sea anemones.</title>
        <authorList>
            <person name="Oliveira J.S."/>
            <person name="Fuentes-Silva D."/>
            <person name="King G.F."/>
        </authorList>
    </citation>
    <scope>NOMENCLATURE</scope>
</reference>
<sequence length="49" mass="5184">GVSCLCDSDGPSVRGNTLSGILWFYPSGCPSGWHNCKAHGPTIGWCCKQ</sequence>
<name>NA16_ANTXA</name>
<organism>
    <name type="scientific">Anthopleura xanthogrammica</name>
    <name type="common">Giant green sea anemone</name>
    <name type="synonym">Actinia xanthogrammica</name>
    <dbReference type="NCBI Taxonomy" id="6112"/>
    <lineage>
        <taxon>Eukaryota</taxon>
        <taxon>Metazoa</taxon>
        <taxon>Cnidaria</taxon>
        <taxon>Anthozoa</taxon>
        <taxon>Hexacorallia</taxon>
        <taxon>Actiniaria</taxon>
        <taxon>Actiniidae</taxon>
        <taxon>Anthopleura</taxon>
    </lineage>
</organism>
<evidence type="ECO:0000250" key="1">
    <source>
        <dbReference type="UniProtKB" id="P01530"/>
    </source>
</evidence>
<evidence type="ECO:0000269" key="2">
    <source>
    </source>
</evidence>
<evidence type="ECO:0000303" key="3">
    <source>
    </source>
</evidence>
<evidence type="ECO:0000303" key="4">
    <source>
    </source>
</evidence>
<evidence type="ECO:0000305" key="5"/>
<comment type="function">
    <text evidence="2">Binds specifically to voltage-gated sodium channels (Nav) (site 3), thereby delaying their inactivation during signal transduction. Thus it may strongly stimulate mammalian cardiac muscle contraction.</text>
</comment>
<comment type="subcellular location">
    <subcellularLocation>
        <location evidence="5">Secreted</location>
    </subcellularLocation>
    <subcellularLocation>
        <location evidence="5">Nematocyst</location>
    </subcellularLocation>
</comment>
<comment type="similarity">
    <text evidence="5">Belongs to the sea anemone sodium channel inhibitory toxin family. Type I subfamily.</text>
</comment>
<dbReference type="SMR" id="P0C5G3"/>
<dbReference type="GO" id="GO:0005576">
    <property type="term" value="C:extracellular region"/>
    <property type="evidence" value="ECO:0007669"/>
    <property type="project" value="UniProtKB-SubCell"/>
</dbReference>
<dbReference type="GO" id="GO:0042151">
    <property type="term" value="C:nematocyst"/>
    <property type="evidence" value="ECO:0007669"/>
    <property type="project" value="UniProtKB-SubCell"/>
</dbReference>
<dbReference type="GO" id="GO:0017080">
    <property type="term" value="F:sodium channel regulator activity"/>
    <property type="evidence" value="ECO:0007669"/>
    <property type="project" value="UniProtKB-KW"/>
</dbReference>
<dbReference type="GO" id="GO:0090729">
    <property type="term" value="F:toxin activity"/>
    <property type="evidence" value="ECO:0007669"/>
    <property type="project" value="UniProtKB-KW"/>
</dbReference>
<dbReference type="GO" id="GO:0009966">
    <property type="term" value="P:regulation of signal transduction"/>
    <property type="evidence" value="ECO:0007669"/>
    <property type="project" value="InterPro"/>
</dbReference>
<dbReference type="Gene3D" id="2.20.20.10">
    <property type="entry name" value="Anthopleurin-A"/>
    <property type="match status" value="1"/>
</dbReference>
<dbReference type="InterPro" id="IPR000693">
    <property type="entry name" value="Anenome_toxin"/>
</dbReference>
<dbReference type="InterPro" id="IPR023355">
    <property type="entry name" value="Myo_ane_neurotoxin_sf"/>
</dbReference>
<dbReference type="Pfam" id="PF00706">
    <property type="entry name" value="Toxin_4"/>
    <property type="match status" value="1"/>
</dbReference>
<dbReference type="PIRSF" id="PIRSF001905">
    <property type="entry name" value="Anenome_toxin"/>
    <property type="match status" value="1"/>
</dbReference>
<dbReference type="SUPFAM" id="SSF57392">
    <property type="entry name" value="Defensin-like"/>
    <property type="match status" value="1"/>
</dbReference>
<proteinExistence type="evidence at transcript level"/>
<protein>
    <recommendedName>
        <fullName evidence="3">Delta-actitoxin-Axm1h</fullName>
        <shortName evidence="3">Delta-AITX-Axm1h</shortName>
    </recommendedName>
    <alternativeName>
        <fullName evidence="4">PCR3-7</fullName>
    </alternativeName>
    <alternativeName>
        <fullName evidence="5">Toxin PCR6</fullName>
    </alternativeName>
</protein>
<feature type="chain" id="PRO_0000305117" description="Delta-actitoxin-Axm1h">
    <location>
        <begin position="1"/>
        <end position="49"/>
    </location>
</feature>
<feature type="disulfide bond" evidence="1">
    <location>
        <begin position="4"/>
        <end position="46"/>
    </location>
</feature>
<feature type="disulfide bond" evidence="1">
    <location>
        <begin position="6"/>
        <end position="36"/>
    </location>
</feature>
<feature type="disulfide bond" evidence="1">
    <location>
        <begin position="29"/>
        <end position="47"/>
    </location>
</feature>